<organism>
    <name type="scientific">Simian virus 12 (strain wt100)</name>
    <name type="common">SV-12</name>
    <name type="synonym">Baboon polyomavirus 1</name>
    <dbReference type="NCBI Taxonomy" id="557605"/>
    <lineage>
        <taxon>Viruses</taxon>
        <taxon>Monodnaviria</taxon>
        <taxon>Shotokuvirae</taxon>
        <taxon>Cossaviricota</taxon>
        <taxon>Papovaviricetes</taxon>
        <taxon>Sepolyvirales</taxon>
        <taxon>Polyomaviridae</taxon>
        <taxon>Simian virus 12</taxon>
    </lineage>
</organism>
<name>ST_POVS1</name>
<sequence length="172" mass="20420">MDKVLNREESMELMDLLGLERAAWGNLPLMRKAYLRKCKEFHPDKGGDEDKMKRMNTLYKKMEQDVKVAHQPDFGAWHSSEVGSDFPPCPDTLYCKDWPLCATKPSAHCPCMLCQLRNKHVYRKFLRRDPLVWIDCYCFDCFRQWFGLDLNEEALLWWSHIIGETPFRDLKL</sequence>
<proteinExistence type="inferred from homology"/>
<dbReference type="EMBL" id="AY614708">
    <property type="protein sequence ID" value="AAV75980.1"/>
    <property type="molecule type" value="Genomic_DNA"/>
</dbReference>
<dbReference type="EMBL" id="DQ435829">
    <property type="protein sequence ID" value="ABD92878.1"/>
    <property type="molecule type" value="Genomic_DNA"/>
</dbReference>
<dbReference type="RefSeq" id="YP_406556.1">
    <property type="nucleotide sequence ID" value="NC_007611.1"/>
</dbReference>
<dbReference type="SMR" id="Q3L6L4"/>
<dbReference type="GeneID" id="5123719"/>
<dbReference type="Proteomes" id="UP000130309">
    <property type="component" value="Segment"/>
</dbReference>
<dbReference type="Proteomes" id="UP000173202">
    <property type="component" value="Genome"/>
</dbReference>
<dbReference type="GO" id="GO:0030430">
    <property type="term" value="C:host cell cytoplasm"/>
    <property type="evidence" value="ECO:0007669"/>
    <property type="project" value="UniProtKB-SubCell"/>
</dbReference>
<dbReference type="GO" id="GO:0042025">
    <property type="term" value="C:host cell nucleus"/>
    <property type="evidence" value="ECO:0007669"/>
    <property type="project" value="UniProtKB-SubCell"/>
</dbReference>
<dbReference type="GO" id="GO:0008270">
    <property type="term" value="F:zinc ion binding"/>
    <property type="evidence" value="ECO:0007669"/>
    <property type="project" value="UniProtKB-KW"/>
</dbReference>
<dbReference type="CDD" id="cd06257">
    <property type="entry name" value="DnaJ"/>
    <property type="match status" value="1"/>
</dbReference>
<dbReference type="FunFam" id="1.10.287.110:FF:000161">
    <property type="entry name" value="Small t antigen"/>
    <property type="match status" value="1"/>
</dbReference>
<dbReference type="Gene3D" id="1.10.287.110">
    <property type="entry name" value="DnaJ domain"/>
    <property type="match status" value="1"/>
</dbReference>
<dbReference type="Gene3D" id="1.20.120.1860">
    <property type="entry name" value="Small t-antigen, unique domain"/>
    <property type="match status" value="1"/>
</dbReference>
<dbReference type="InterPro" id="IPR001623">
    <property type="entry name" value="DnaJ_domain"/>
</dbReference>
<dbReference type="InterPro" id="IPR036869">
    <property type="entry name" value="J_dom_sf"/>
</dbReference>
<dbReference type="InterPro" id="IPR003354">
    <property type="entry name" value="Papo_T_antigen"/>
</dbReference>
<dbReference type="InterPro" id="IPR036092">
    <property type="entry name" value="Papo_T_antigensf"/>
</dbReference>
<dbReference type="Pfam" id="PF02380">
    <property type="entry name" value="Papo_T_antigen"/>
    <property type="match status" value="1"/>
</dbReference>
<dbReference type="SMART" id="SM00271">
    <property type="entry name" value="DnaJ"/>
    <property type="match status" value="1"/>
</dbReference>
<dbReference type="SUPFAM" id="SSF46565">
    <property type="entry name" value="Chaperone J-domain"/>
    <property type="match status" value="1"/>
</dbReference>
<dbReference type="SUPFAM" id="SSF161240">
    <property type="entry name" value="T-antigen specific domain-like"/>
    <property type="match status" value="1"/>
</dbReference>
<dbReference type="PROSITE" id="PS50076">
    <property type="entry name" value="DNAJ_2"/>
    <property type="match status" value="1"/>
</dbReference>
<accession>Q3L6L4</accession>
<accession>Q1W5W9</accession>
<feature type="chain" id="PRO_0000356266" description="Small t antigen">
    <location>
        <begin position="1"/>
        <end position="172"/>
    </location>
</feature>
<feature type="domain" description="J" evidence="2">
    <location>
        <begin position="12"/>
        <end position="75"/>
    </location>
</feature>
<feature type="zinc finger region" description="C4-type; atypical">
    <location>
        <begin position="101"/>
        <end position="114"/>
    </location>
</feature>
<feature type="zinc finger region" description="H1C3-type; atypical">
    <location>
        <begin position="120"/>
        <end position="141"/>
    </location>
</feature>
<feature type="modified residue" description="N-acetylmethionine; by host" evidence="1">
    <location>
        <position position="1"/>
    </location>
</feature>
<comment type="function">
    <text evidence="1">Promotes efficient viral genome replication by accelerating both G1 and S phase progression of the cell cycle. Inhibits host PP2A by binding to the A subunit, thereby displacing lower affinity regulatory B subunit. Inactivation of PP2A in turn results in the transactivation of cyclin A and cyclin D1 promoters. Late during the infection cycle, ST may induce dephosphorylation of host MTOR, leading to the inhibition of cap-dependent translation. May establish and maintain high levels of viral genomes during persistent infection in cell culture.</text>
</comment>
<comment type="subunit">
    <text evidence="1">Interacts with host PPP2R1A; the interaction inhibits PP2A activity.</text>
</comment>
<comment type="subcellular location">
    <subcellularLocation>
        <location>Host cytoplasm</location>
    </subcellularLocation>
    <subcellularLocation>
        <location evidence="1">Host nucleus</location>
    </subcellularLocation>
</comment>
<comment type="alternative products">
    <event type="alternative splicing"/>
    <isoform>
        <id>Q3L6L4-1</id>
        <name>Small t antigen</name>
        <sequence type="displayed"/>
    </isoform>
    <isoform>
        <id>Q3L6L5-1</id>
        <name>Large T antigen</name>
        <sequence type="external"/>
    </isoform>
</comment>
<comment type="domain">
    <text evidence="1">The common region of ST and LT proteins comprises the J domain. This domain is essential for multiple viral activities, including virion assembly, viral DNA replication, transformation and transcriptional activation. This domain is also required for cyclin A-transactivating activity of ST.</text>
</comment>
<comment type="miscellaneous">
    <molecule>Isoform Small t antigen</molecule>
    <text>Produced by alternative splicing.</text>
</comment>
<reference key="1">
    <citation type="journal article" date="2005" name="J. Virol.">
        <title>Complete nucleotide sequence of polyomavirus SA12.</title>
        <authorList>
            <person name="Cantalupo P."/>
            <person name="Doering A."/>
            <person name="Sullivan C.S."/>
            <person name="Pal A."/>
            <person name="Peden K.W."/>
            <person name="Lewis A.M."/>
            <person name="Pipas J.M."/>
        </authorList>
    </citation>
    <scope>NUCLEOTIDE SEQUENCE [GENOMIC DNA]</scope>
    <source>
        <strain>SA12</strain>
    </source>
</reference>
<reference key="2">
    <citation type="journal article" date="2006" name="J. Virol.">
        <title>Comparing phylogenetic codivergence between polyomaviruses and their hosts.</title>
        <authorList>
            <person name="Perez-Losada M."/>
            <person name="Christensen R.G."/>
            <person name="McClellan D.A."/>
            <person name="Adams B.J."/>
            <person name="Viscidi R.P."/>
            <person name="Demma J.C."/>
            <person name="Crandall K.A."/>
        </authorList>
    </citation>
    <scope>NUCLEOTIDE SEQUENCE [GENOMIC DNA]</scope>
</reference>
<evidence type="ECO:0000250" key="1">
    <source>
        <dbReference type="UniProtKB" id="P03081"/>
    </source>
</evidence>
<evidence type="ECO:0000255" key="2">
    <source>
        <dbReference type="PROSITE-ProRule" id="PRU00286"/>
    </source>
</evidence>
<protein>
    <recommendedName>
        <fullName>Small t antigen</fullName>
        <shortName>ST</shortName>
        <shortName>ST-AG</shortName>
    </recommendedName>
</protein>
<organismHost>
    <name type="scientific">Papio hamadryas ursinus</name>
    <name type="common">Chacma baboon</name>
    <dbReference type="NCBI Taxonomy" id="36229"/>
</organismHost>
<keyword id="KW-0007">Acetylation</keyword>
<keyword id="KW-0010">Activator</keyword>
<keyword id="KW-0025">Alternative splicing</keyword>
<keyword id="KW-0244">Early protein</keyword>
<keyword id="KW-1035">Host cytoplasm</keyword>
<keyword id="KW-1048">Host nucleus</keyword>
<keyword id="KW-0945">Host-virus interaction</keyword>
<keyword id="KW-0479">Metal-binding</keyword>
<keyword id="KW-0553">Oncogene</keyword>
<keyword id="KW-0597">Phosphoprotein</keyword>
<keyword id="KW-0804">Transcription</keyword>
<keyword id="KW-0805">Transcription regulation</keyword>
<keyword id="KW-0862">Zinc</keyword>
<keyword id="KW-0863">Zinc-finger</keyword>